<accession>P35353</accession>
<sequence length="415" mass="47842">MGRRPQLRLVKALLLLGLNPVSTSLQDQRCENLSLTSNVSGLQCNASVDLIGTCWPRSPAGQLVVRPCPAFFYGVRYNTTNNGYRECLANGSWAARVNYSECQEILNEEKKSKVHYHVAVIINYLGHCISLVALLVAFVLFLRLRSIRCLRNIIHWNLISAFILRNATWFVVQLTVSPEVHQSNVAWCRLVTAAYNYFHVTNFFWMFGEGCYLHTAIVLTYSTDRLRKWMFVCIGWGVPFPIIVAWAIGKLHYDNEKCWFGKRPGVYTDYIYQGPMILVLLINFIFLFNIVRILMTKLRASTTSETIQYRKAVKATLVLLPLLGITYMLFFVNPGEDEVSRVVFIYFNSFLESFQGFFVSVFYCFLNSEVRSAIRKRWRRWQDKHSIRARVARAMSIPTSPTRVSFHSIKQSTAV</sequence>
<comment type="function">
    <text evidence="3 5 6">G-protein coupled receptor for CRH (corticotropin-releasing factor) and UCN (urocortin). Has high affinity for CRH and UCN. Ligand binding causes a conformation change that triggers signaling via guanine nucleotide-binding proteins (G proteins) and down-stream effectors, such as adenylate cyclase. Promotes the activation of adenylate cyclase, leading to increased intracellular cAMP levels. Inhibits the activity of the calcium channel CACNA1H. Required for normal embryonic development of the adrenal gland and for normal hormonal responses to stress. Plays a role in the response to anxiogenic stimuli.</text>
</comment>
<comment type="subunit">
    <text evidence="1 4">Interacts (via N-terminal extracellular domain) with CRH and UCN. Interacts with DLG1; this inhibits endocytosis of CRHR1 after agonist binding (By similarity). Heterodimer; heterodimerizes with GPER1.</text>
</comment>
<comment type="interaction">
    <interactant intactId="EBI-9030306">
        <id>P35353</id>
    </interactant>
    <interactant intactId="EBI-9030248">
        <id>P55090</id>
        <label>Ucn</label>
    </interactant>
    <organismsDiffer>false</organismsDiffer>
    <experiments>3</experiments>
</comment>
<comment type="subcellular location">
    <subcellularLocation>
        <location>Cell membrane</location>
        <topology>Multi-pass membrane protein</topology>
    </subcellularLocation>
    <subcellularLocation>
        <location evidence="1">Endosome</location>
    </subcellularLocation>
    <text evidence="1">Agonist-binding promotes endocytosis.</text>
</comment>
<comment type="tissue specificity">
    <text evidence="6">Detected in brain, especially in cerebellum. Detected in pituitary gland, and at lower levels in the olfactory bulb.</text>
</comment>
<comment type="domain">
    <text evidence="1">The transmembrane domain is composed of seven transmembrane helices that are arranged in V-shape. Transmembrane helix 7 assumes a sharply kinked structure (By similarity).</text>
</comment>
<comment type="PTM">
    <text>C-terminal Ser or Thr residues may be phosphorylated.</text>
</comment>
<comment type="PTM">
    <text evidence="1">Phosphorylation at Ser-301 by PKA prevents maximal coupling to Gq-protein, and thereby negatively regulates downstream signaling.</text>
</comment>
<comment type="similarity">
    <text evidence="7">Belongs to the G-protein coupled receptor 2 family.</text>
</comment>
<organism>
    <name type="scientific">Rattus norvegicus</name>
    <name type="common">Rat</name>
    <dbReference type="NCBI Taxonomy" id="10116"/>
    <lineage>
        <taxon>Eukaryota</taxon>
        <taxon>Metazoa</taxon>
        <taxon>Chordata</taxon>
        <taxon>Craniata</taxon>
        <taxon>Vertebrata</taxon>
        <taxon>Euteleostomi</taxon>
        <taxon>Mammalia</taxon>
        <taxon>Eutheria</taxon>
        <taxon>Euarchontoglires</taxon>
        <taxon>Glires</taxon>
        <taxon>Rodentia</taxon>
        <taxon>Myomorpha</taxon>
        <taxon>Muroidea</taxon>
        <taxon>Muridae</taxon>
        <taxon>Murinae</taxon>
        <taxon>Rattus</taxon>
    </lineage>
</organism>
<protein>
    <recommendedName>
        <fullName>Corticotropin-releasing factor receptor 1</fullName>
        <shortName>CRF-R-1</shortName>
        <shortName>CRF-R1</shortName>
        <shortName>CRFR-1</shortName>
    </recommendedName>
    <alternativeName>
        <fullName>Corticotropin-releasing hormone receptor 1</fullName>
        <shortName>CRH-R-1</shortName>
        <shortName>CRH-R1</shortName>
    </alternativeName>
</protein>
<evidence type="ECO:0000250" key="1"/>
<evidence type="ECO:0000250" key="2">
    <source>
        <dbReference type="UniProtKB" id="P34998"/>
    </source>
</evidence>
<evidence type="ECO:0000269" key="3">
    <source>
    </source>
</evidence>
<evidence type="ECO:0000269" key="4">
    <source>
    </source>
</evidence>
<evidence type="ECO:0000269" key="5">
    <source>
    </source>
</evidence>
<evidence type="ECO:0000269" key="6">
    <source>
    </source>
</evidence>
<evidence type="ECO:0000305" key="7"/>
<dbReference type="EMBL" id="L24096">
    <property type="status" value="NOT_ANNOTATED_CDS"/>
    <property type="molecule type" value="mRNA"/>
</dbReference>
<dbReference type="EMBL" id="L25438">
    <property type="protein sequence ID" value="AAA16441.1"/>
    <property type="molecule type" value="mRNA"/>
</dbReference>
<dbReference type="EMBL" id="U53498">
    <property type="protein sequence ID" value="AAC53519.1"/>
    <property type="molecule type" value="Genomic_DNA"/>
</dbReference>
<dbReference type="EMBL" id="U53486">
    <property type="protein sequence ID" value="AAC53519.1"/>
    <property type="status" value="JOINED"/>
    <property type="molecule type" value="Genomic_DNA"/>
</dbReference>
<dbReference type="EMBL" id="U53487">
    <property type="protein sequence ID" value="AAC53519.1"/>
    <property type="status" value="JOINED"/>
    <property type="molecule type" value="Genomic_DNA"/>
</dbReference>
<dbReference type="EMBL" id="U53488">
    <property type="protein sequence ID" value="AAC53519.1"/>
    <property type="status" value="JOINED"/>
    <property type="molecule type" value="Genomic_DNA"/>
</dbReference>
<dbReference type="EMBL" id="U53489">
    <property type="protein sequence ID" value="AAC53519.1"/>
    <property type="status" value="JOINED"/>
    <property type="molecule type" value="Genomic_DNA"/>
</dbReference>
<dbReference type="EMBL" id="U53490">
    <property type="protein sequence ID" value="AAC53519.1"/>
    <property type="status" value="JOINED"/>
    <property type="molecule type" value="Genomic_DNA"/>
</dbReference>
<dbReference type="EMBL" id="U53491">
    <property type="protein sequence ID" value="AAC53519.1"/>
    <property type="status" value="JOINED"/>
    <property type="molecule type" value="Genomic_DNA"/>
</dbReference>
<dbReference type="EMBL" id="U53492">
    <property type="protein sequence ID" value="AAC53519.1"/>
    <property type="status" value="JOINED"/>
    <property type="molecule type" value="Genomic_DNA"/>
</dbReference>
<dbReference type="EMBL" id="U53493">
    <property type="protein sequence ID" value="AAC53519.1"/>
    <property type="status" value="JOINED"/>
    <property type="molecule type" value="Genomic_DNA"/>
</dbReference>
<dbReference type="EMBL" id="U53494">
    <property type="protein sequence ID" value="AAC53519.1"/>
    <property type="status" value="JOINED"/>
    <property type="molecule type" value="Genomic_DNA"/>
</dbReference>
<dbReference type="EMBL" id="U53495">
    <property type="protein sequence ID" value="AAC53519.1"/>
    <property type="status" value="JOINED"/>
    <property type="molecule type" value="Genomic_DNA"/>
</dbReference>
<dbReference type="EMBL" id="U53496">
    <property type="protein sequence ID" value="AAC53519.1"/>
    <property type="status" value="JOINED"/>
    <property type="molecule type" value="Genomic_DNA"/>
</dbReference>
<dbReference type="EMBL" id="U53497">
    <property type="protein sequence ID" value="AAC53519.1"/>
    <property type="status" value="JOINED"/>
    <property type="molecule type" value="Genomic_DNA"/>
</dbReference>
<dbReference type="PIR" id="I58144">
    <property type="entry name" value="I58144"/>
</dbReference>
<dbReference type="RefSeq" id="NP_112261.3">
    <property type="nucleotide sequence ID" value="NM_030999.6"/>
</dbReference>
<dbReference type="SMR" id="P35353"/>
<dbReference type="BioGRID" id="248692">
    <property type="interactions" value="4"/>
</dbReference>
<dbReference type="CORUM" id="P35353"/>
<dbReference type="FunCoup" id="P35353">
    <property type="interactions" value="352"/>
</dbReference>
<dbReference type="IntAct" id="P35353">
    <property type="interactions" value="1"/>
</dbReference>
<dbReference type="STRING" id="10116.ENSRNOP00000006764"/>
<dbReference type="BindingDB" id="P35353"/>
<dbReference type="ChEMBL" id="CHEMBL4649"/>
<dbReference type="GuidetoPHARMACOLOGY" id="212"/>
<dbReference type="GlyCosmos" id="P35353">
    <property type="glycosylation" value="5 sites, No reported glycans"/>
</dbReference>
<dbReference type="GlyGen" id="P35353">
    <property type="glycosylation" value="7 sites"/>
</dbReference>
<dbReference type="iPTMnet" id="P35353"/>
<dbReference type="PhosphoSitePlus" id="P35353"/>
<dbReference type="PaxDb" id="10116-ENSRNOP00000006764"/>
<dbReference type="GeneID" id="58959"/>
<dbReference type="KEGG" id="rno:58959"/>
<dbReference type="AGR" id="RGD:61276"/>
<dbReference type="CTD" id="1394"/>
<dbReference type="RGD" id="61276">
    <property type="gene designation" value="Crhr1"/>
</dbReference>
<dbReference type="VEuPathDB" id="HostDB:ENSRNOG00000004900"/>
<dbReference type="eggNOG" id="KOG4564">
    <property type="taxonomic scope" value="Eukaryota"/>
</dbReference>
<dbReference type="HOGENOM" id="CLU_002753_4_1_1"/>
<dbReference type="InParanoid" id="P35353"/>
<dbReference type="OrthoDB" id="5967113at2759"/>
<dbReference type="PhylomeDB" id="P35353"/>
<dbReference type="TreeFam" id="TF315710"/>
<dbReference type="Reactome" id="R-RNO-373080">
    <property type="pathway name" value="Class B/2 (Secretin family receptors)"/>
</dbReference>
<dbReference type="PRO" id="PR:P35353"/>
<dbReference type="Proteomes" id="UP000002494">
    <property type="component" value="Chromosome 10"/>
</dbReference>
<dbReference type="Bgee" id="ENSRNOG00000004900">
    <property type="expression patterns" value="Expressed in cerebellum and 3 other cell types or tissues"/>
</dbReference>
<dbReference type="ExpressionAtlas" id="P35353">
    <property type="expression patterns" value="baseline and differential"/>
</dbReference>
<dbReference type="GO" id="GO:0045177">
    <property type="term" value="C:apical part of cell"/>
    <property type="evidence" value="ECO:0000314"/>
    <property type="project" value="RGD"/>
</dbReference>
<dbReference type="GO" id="GO:0030425">
    <property type="term" value="C:dendrite"/>
    <property type="evidence" value="ECO:0000314"/>
    <property type="project" value="RGD"/>
</dbReference>
<dbReference type="GO" id="GO:0098978">
    <property type="term" value="C:glutamatergic synapse"/>
    <property type="evidence" value="ECO:0000266"/>
    <property type="project" value="RGD"/>
</dbReference>
<dbReference type="GO" id="GO:0016020">
    <property type="term" value="C:membrane"/>
    <property type="evidence" value="ECO:0000266"/>
    <property type="project" value="RGD"/>
</dbReference>
<dbReference type="GO" id="GO:0005771">
    <property type="term" value="C:multivesicular body"/>
    <property type="evidence" value="ECO:0000314"/>
    <property type="project" value="RGD"/>
</dbReference>
<dbReference type="GO" id="GO:0043005">
    <property type="term" value="C:neuron projection"/>
    <property type="evidence" value="ECO:0000318"/>
    <property type="project" value="GO_Central"/>
</dbReference>
<dbReference type="GO" id="GO:0043025">
    <property type="term" value="C:neuronal cell body"/>
    <property type="evidence" value="ECO:0000314"/>
    <property type="project" value="RGD"/>
</dbReference>
<dbReference type="GO" id="GO:0005886">
    <property type="term" value="C:plasma membrane"/>
    <property type="evidence" value="ECO:0000250"/>
    <property type="project" value="UniProtKB"/>
</dbReference>
<dbReference type="GO" id="GO:0098839">
    <property type="term" value="C:postsynaptic density membrane"/>
    <property type="evidence" value="ECO:0000266"/>
    <property type="project" value="RGD"/>
</dbReference>
<dbReference type="GO" id="GO:0005802">
    <property type="term" value="C:trans-Golgi network"/>
    <property type="evidence" value="ECO:0000314"/>
    <property type="project" value="RGD"/>
</dbReference>
<dbReference type="GO" id="GO:0031982">
    <property type="term" value="C:vesicle"/>
    <property type="evidence" value="ECO:0000314"/>
    <property type="project" value="RGD"/>
</dbReference>
<dbReference type="GO" id="GO:0015056">
    <property type="term" value="F:corticotrophin-releasing factor receptor activity"/>
    <property type="evidence" value="ECO:0000250"/>
    <property type="project" value="UniProtKB"/>
</dbReference>
<dbReference type="GO" id="GO:0051424">
    <property type="term" value="F:corticotropin-releasing hormone binding"/>
    <property type="evidence" value="ECO:0000314"/>
    <property type="project" value="RGD"/>
</dbReference>
<dbReference type="GO" id="GO:0043404">
    <property type="term" value="F:corticotropin-releasing hormone receptor activity"/>
    <property type="evidence" value="ECO:0000314"/>
    <property type="project" value="RGD"/>
</dbReference>
<dbReference type="GO" id="GO:0008528">
    <property type="term" value="F:G protein-coupled peptide receptor activity"/>
    <property type="evidence" value="ECO:0000318"/>
    <property type="project" value="GO_Central"/>
</dbReference>
<dbReference type="GO" id="GO:0004930">
    <property type="term" value="F:G protein-coupled receptor activity"/>
    <property type="evidence" value="ECO:0000314"/>
    <property type="project" value="RGD"/>
</dbReference>
<dbReference type="GO" id="GO:0001965">
    <property type="term" value="F:G-protein alpha-subunit binding"/>
    <property type="evidence" value="ECO:0000353"/>
    <property type="project" value="RGD"/>
</dbReference>
<dbReference type="GO" id="GO:0042277">
    <property type="term" value="F:peptide binding"/>
    <property type="evidence" value="ECO:0000314"/>
    <property type="project" value="RGD"/>
</dbReference>
<dbReference type="GO" id="GO:0044877">
    <property type="term" value="F:protein-containing complex binding"/>
    <property type="evidence" value="ECO:0000353"/>
    <property type="project" value="RGD"/>
</dbReference>
<dbReference type="GO" id="GO:0007189">
    <property type="term" value="P:adenylate cyclase-activating G protein-coupled receptor signaling pathway"/>
    <property type="evidence" value="ECO:0000314"/>
    <property type="project" value="RGD"/>
</dbReference>
<dbReference type="GO" id="GO:0007188">
    <property type="term" value="P:adenylate cyclase-modulating G protein-coupled receptor signaling pathway"/>
    <property type="evidence" value="ECO:0000314"/>
    <property type="project" value="RGD"/>
</dbReference>
<dbReference type="GO" id="GO:0030325">
    <property type="term" value="P:adrenal gland development"/>
    <property type="evidence" value="ECO:0000266"/>
    <property type="project" value="RGD"/>
</dbReference>
<dbReference type="GO" id="GO:0048148">
    <property type="term" value="P:behavioral response to cocaine"/>
    <property type="evidence" value="ECO:0000315"/>
    <property type="project" value="RGD"/>
</dbReference>
<dbReference type="GO" id="GO:0048149">
    <property type="term" value="P:behavioral response to ethanol"/>
    <property type="evidence" value="ECO:0000266"/>
    <property type="project" value="RGD"/>
</dbReference>
<dbReference type="GO" id="GO:0048266">
    <property type="term" value="P:behavioral response to pain"/>
    <property type="evidence" value="ECO:0000315"/>
    <property type="project" value="RGD"/>
</dbReference>
<dbReference type="GO" id="GO:0007166">
    <property type="term" value="P:cell surface receptor signaling pathway"/>
    <property type="evidence" value="ECO:0007669"/>
    <property type="project" value="InterPro"/>
</dbReference>
<dbReference type="GO" id="GO:0071376">
    <property type="term" value="P:cellular response to corticotropin-releasing hormone stimulus"/>
    <property type="evidence" value="ECO:0000250"/>
    <property type="project" value="UniProtKB"/>
</dbReference>
<dbReference type="GO" id="GO:0051458">
    <property type="term" value="P:corticotropin secretion"/>
    <property type="evidence" value="ECO:0000250"/>
    <property type="project" value="UniProtKB"/>
</dbReference>
<dbReference type="GO" id="GO:0030855">
    <property type="term" value="P:epithelial cell differentiation"/>
    <property type="evidence" value="ECO:0000315"/>
    <property type="project" value="RGD"/>
</dbReference>
<dbReference type="GO" id="GO:0035640">
    <property type="term" value="P:exploration behavior"/>
    <property type="evidence" value="ECO:0000266"/>
    <property type="project" value="RGD"/>
</dbReference>
<dbReference type="GO" id="GO:0042596">
    <property type="term" value="P:fear response"/>
    <property type="evidence" value="ECO:0000266"/>
    <property type="project" value="RGD"/>
</dbReference>
<dbReference type="GO" id="GO:0007631">
    <property type="term" value="P:feeding behavior"/>
    <property type="evidence" value="ECO:0000315"/>
    <property type="project" value="RGD"/>
</dbReference>
<dbReference type="GO" id="GO:0051867">
    <property type="term" value="P:general adaptation syndrome, behavioral process"/>
    <property type="evidence" value="ECO:0000266"/>
    <property type="project" value="RGD"/>
</dbReference>
<dbReference type="GO" id="GO:0021854">
    <property type="term" value="P:hypothalamus development"/>
    <property type="evidence" value="ECO:0000270"/>
    <property type="project" value="RGD"/>
</dbReference>
<dbReference type="GO" id="GO:0035641">
    <property type="term" value="P:locomotory exploration behavior"/>
    <property type="evidence" value="ECO:0000315"/>
    <property type="project" value="RGD"/>
</dbReference>
<dbReference type="GO" id="GO:0060291">
    <property type="term" value="P:long-term synaptic potentiation"/>
    <property type="evidence" value="ECO:0000315"/>
    <property type="project" value="RGD"/>
</dbReference>
<dbReference type="GO" id="GO:0007613">
    <property type="term" value="P:memory"/>
    <property type="evidence" value="ECO:0000315"/>
    <property type="project" value="RGD"/>
</dbReference>
<dbReference type="GO" id="GO:0032811">
    <property type="term" value="P:negative regulation of epinephrine secretion"/>
    <property type="evidence" value="ECO:0000315"/>
    <property type="project" value="RGD"/>
</dbReference>
<dbReference type="GO" id="GO:2000252">
    <property type="term" value="P:negative regulation of feeding behavior"/>
    <property type="evidence" value="ECO:0000315"/>
    <property type="project" value="RGD"/>
</dbReference>
<dbReference type="GO" id="GO:0043524">
    <property type="term" value="P:negative regulation of neuron apoptotic process"/>
    <property type="evidence" value="ECO:0000315"/>
    <property type="project" value="RGD"/>
</dbReference>
<dbReference type="GO" id="GO:0007218">
    <property type="term" value="P:neuropeptide signaling pathway"/>
    <property type="evidence" value="ECO:0000314"/>
    <property type="project" value="RGD"/>
</dbReference>
<dbReference type="GO" id="GO:0007200">
    <property type="term" value="P:phospholipase C-activating G protein-coupled receptor signaling pathway"/>
    <property type="evidence" value="ECO:0000314"/>
    <property type="project" value="RGD"/>
</dbReference>
<dbReference type="GO" id="GO:0141163">
    <property type="term" value="P:positive regulation of cAMP/PKA signal transduction"/>
    <property type="evidence" value="ECO:0000315"/>
    <property type="project" value="RGD"/>
</dbReference>
<dbReference type="GO" id="GO:0007204">
    <property type="term" value="P:positive regulation of cytosolic calcium ion concentration"/>
    <property type="evidence" value="ECO:0000315"/>
    <property type="project" value="RGD"/>
</dbReference>
<dbReference type="GO" id="GO:0043306">
    <property type="term" value="P:positive regulation of mast cell degranulation"/>
    <property type="evidence" value="ECO:0000315"/>
    <property type="project" value="RGD"/>
</dbReference>
<dbReference type="GO" id="GO:2000852">
    <property type="term" value="P:regulation of corticosterone secretion"/>
    <property type="evidence" value="ECO:0000250"/>
    <property type="project" value="UniProtKB"/>
</dbReference>
<dbReference type="GO" id="GO:0048167">
    <property type="term" value="P:regulation of synaptic plasticity"/>
    <property type="evidence" value="ECO:0000315"/>
    <property type="project" value="RGD"/>
</dbReference>
<dbReference type="GO" id="GO:0051602">
    <property type="term" value="P:response to electrical stimulus"/>
    <property type="evidence" value="ECO:0000315"/>
    <property type="project" value="RGD"/>
</dbReference>
<dbReference type="GO" id="GO:0001666">
    <property type="term" value="P:response to hypoxia"/>
    <property type="evidence" value="ECO:0000315"/>
    <property type="project" value="RGD"/>
</dbReference>
<dbReference type="GO" id="GO:0035902">
    <property type="term" value="P:response to immobilization stress"/>
    <property type="evidence" value="ECO:0000270"/>
    <property type="project" value="RGD"/>
</dbReference>
<dbReference type="GO" id="GO:0008542">
    <property type="term" value="P:visual learning"/>
    <property type="evidence" value="ECO:0000315"/>
    <property type="project" value="RGD"/>
</dbReference>
<dbReference type="CDD" id="cd15445">
    <property type="entry name" value="7tmB1_CRF-R1"/>
    <property type="match status" value="1"/>
</dbReference>
<dbReference type="FunFam" id="1.20.1070.10:FF:000021">
    <property type="entry name" value="Corticotropin releasing factor receptor 2"/>
    <property type="match status" value="1"/>
</dbReference>
<dbReference type="FunFam" id="4.10.1240.10:FF:000007">
    <property type="entry name" value="Corticotropin-releasing factor receptor 1"/>
    <property type="match status" value="1"/>
</dbReference>
<dbReference type="Gene3D" id="4.10.1240.10">
    <property type="entry name" value="GPCR, family 2, extracellular hormone receptor domain"/>
    <property type="match status" value="1"/>
</dbReference>
<dbReference type="Gene3D" id="1.20.1070.10">
    <property type="entry name" value="Rhodopsin 7-helix transmembrane proteins"/>
    <property type="match status" value="1"/>
</dbReference>
<dbReference type="InterPro" id="IPR050332">
    <property type="entry name" value="GPCR_2"/>
</dbReference>
<dbReference type="InterPro" id="IPR017981">
    <property type="entry name" value="GPCR_2-like_7TM"/>
</dbReference>
<dbReference type="InterPro" id="IPR003052">
    <property type="entry name" value="GPCR_2_CRF1_rcpt"/>
</dbReference>
<dbReference type="InterPro" id="IPR003051">
    <property type="entry name" value="GPCR_2_CRF_rcpt"/>
</dbReference>
<dbReference type="InterPro" id="IPR036445">
    <property type="entry name" value="GPCR_2_extracell_dom_sf"/>
</dbReference>
<dbReference type="InterPro" id="IPR001879">
    <property type="entry name" value="GPCR_2_extracellular_dom"/>
</dbReference>
<dbReference type="InterPro" id="IPR000832">
    <property type="entry name" value="GPCR_2_secretin-like"/>
</dbReference>
<dbReference type="InterPro" id="IPR017983">
    <property type="entry name" value="GPCR_2_secretin-like_CS"/>
</dbReference>
<dbReference type="PANTHER" id="PTHR45620:SF2">
    <property type="entry name" value="CORTICOTROPIN-RELEASING FACTOR RECEPTOR 1"/>
    <property type="match status" value="1"/>
</dbReference>
<dbReference type="PANTHER" id="PTHR45620">
    <property type="entry name" value="PDF RECEPTOR-LIKE PROTEIN-RELATED"/>
    <property type="match status" value="1"/>
</dbReference>
<dbReference type="Pfam" id="PF00002">
    <property type="entry name" value="7tm_2"/>
    <property type="match status" value="1"/>
</dbReference>
<dbReference type="Pfam" id="PF02793">
    <property type="entry name" value="HRM"/>
    <property type="match status" value="1"/>
</dbReference>
<dbReference type="PRINTS" id="PR01279">
    <property type="entry name" value="CRFRECEPTOR"/>
</dbReference>
<dbReference type="PRINTS" id="PR01280">
    <property type="entry name" value="CRFRECEPTOR1"/>
</dbReference>
<dbReference type="PRINTS" id="PR00249">
    <property type="entry name" value="GPCRSECRETIN"/>
</dbReference>
<dbReference type="SMART" id="SM00008">
    <property type="entry name" value="HormR"/>
    <property type="match status" value="1"/>
</dbReference>
<dbReference type="SUPFAM" id="SSF81321">
    <property type="entry name" value="Family A G protein-coupled receptor-like"/>
    <property type="match status" value="1"/>
</dbReference>
<dbReference type="SUPFAM" id="SSF111418">
    <property type="entry name" value="Hormone receptor domain"/>
    <property type="match status" value="1"/>
</dbReference>
<dbReference type="PROSITE" id="PS00649">
    <property type="entry name" value="G_PROTEIN_RECEP_F2_1"/>
    <property type="match status" value="1"/>
</dbReference>
<dbReference type="PROSITE" id="PS00650">
    <property type="entry name" value="G_PROTEIN_RECEP_F2_2"/>
    <property type="match status" value="1"/>
</dbReference>
<dbReference type="PROSITE" id="PS50227">
    <property type="entry name" value="G_PROTEIN_RECEP_F2_3"/>
    <property type="match status" value="1"/>
</dbReference>
<dbReference type="PROSITE" id="PS50261">
    <property type="entry name" value="G_PROTEIN_RECEP_F2_4"/>
    <property type="match status" value="1"/>
</dbReference>
<keyword id="KW-1003">Cell membrane</keyword>
<keyword id="KW-1015">Disulfide bond</keyword>
<keyword id="KW-0967">Endosome</keyword>
<keyword id="KW-0297">G-protein coupled receptor</keyword>
<keyword id="KW-0325">Glycoprotein</keyword>
<keyword id="KW-0472">Membrane</keyword>
<keyword id="KW-0597">Phosphoprotein</keyword>
<keyword id="KW-0675">Receptor</keyword>
<keyword id="KW-1185">Reference proteome</keyword>
<keyword id="KW-0732">Signal</keyword>
<keyword id="KW-0807">Transducer</keyword>
<keyword id="KW-0812">Transmembrane</keyword>
<keyword id="KW-1133">Transmembrane helix</keyword>
<gene>
    <name type="primary">Crhr1</name>
    <name type="synonym">Crhr</name>
</gene>
<name>CRFR1_RAT</name>
<reference key="1">
    <citation type="journal article" date="1993" name="Endocrinology">
        <title>Cloning and functional expression of a rat brain corticotropin releasing factor (CRF) receptor.</title>
        <authorList>
            <person name="Perrin M.H."/>
            <person name="Donaldson C.J."/>
            <person name="Chen R."/>
            <person name="Lewis K.A."/>
            <person name="Vale W.W."/>
        </authorList>
    </citation>
    <scope>NUCLEOTIDE SEQUENCE [MRNA]</scope>
    <scope>FUNCTION</scope>
    <scope>SUBCELLULAR LOCATION</scope>
    <source>
        <strain>Sprague-Dawley</strain>
        <tissue>Brain</tissue>
    </source>
</reference>
<reference key="2">
    <citation type="journal article" date="1993" name="Neuron">
        <title>Identification of a seven transmembrane helix receptor for corticotropin-releasing factor and sauvagine in mammalian brain.</title>
        <authorList>
            <person name="Chang C.P."/>
            <person name="Pearse R.V. II"/>
            <person name="O'Connell S."/>
            <person name="Rosenfeld M.G."/>
        </authorList>
    </citation>
    <scope>NUCLEOTIDE SEQUENCE [MRNA]</scope>
    <scope>FUNCTION</scope>
    <scope>SUBCELLULAR LOCATION</scope>
    <scope>TISSUE SPECIFICITY</scope>
    <source>
        <strain>Sprague-Dawley</strain>
        <tissue>Cerebellum</tissue>
    </source>
</reference>
<reference key="3">
    <citation type="journal article" date="1996" name="J. Biol. Chem.">
        <title>The genomic structure of the rat corticotropin releasing factor receptor. A member of the class II G protein-coupled receptors.</title>
        <authorList>
            <person name="Tsai-Morris C.-H."/>
            <person name="Buczko E."/>
            <person name="Geng Y."/>
            <person name="Gamboa-Pinto A."/>
            <person name="Dufau M.L."/>
        </authorList>
    </citation>
    <scope>NUCLEOTIDE SEQUENCE [GENOMIC DNA]</scope>
    <source>
        <tissue>Testis</tissue>
    </source>
</reference>
<reference key="4">
    <citation type="journal article" date="2001" name="Protein Sci.">
        <title>Functional and protein chemical characterization of the N-terminal domain of the rat corticotropin-releasing factor receptor 1.</title>
        <authorList>
            <person name="Hofmann B.A."/>
            <person name="Sydow S."/>
            <person name="Jahn O."/>
            <person name="van Werven L."/>
            <person name="Liepold T."/>
            <person name="Eckart K."/>
            <person name="Spiess J."/>
        </authorList>
    </citation>
    <scope>FUNCTION</scope>
    <scope>DISULFIDE BONDS</scope>
    <scope>GLYCOSYLATION AT ASN-38; ASN-45; ASN-78; ASN-90 AND ASN-98</scope>
</reference>
<reference key="5">
    <citation type="journal article" date="2013" name="J. Biol. Chem.">
        <title>Post-synaptic density-95 (PSD-95) binding capacity of G-protein-coupled receptor 30 (GPR30), an estrogen receptor that can be identified in hippocampal dendritic spines.</title>
        <authorList>
            <person name="Akama K.T."/>
            <person name="Thompson L.I."/>
            <person name="Milner T.A."/>
            <person name="McEwen B.S."/>
        </authorList>
    </citation>
    <scope>SUBUNIT</scope>
</reference>
<proteinExistence type="evidence at protein level"/>
<feature type="signal peptide">
    <location>
        <begin position="1"/>
        <end position="23"/>
    </location>
</feature>
<feature type="chain" id="PRO_0000012816" description="Corticotropin-releasing factor receptor 1">
    <location>
        <begin position="24"/>
        <end position="415"/>
    </location>
</feature>
<feature type="topological domain" description="Extracellular" evidence="1">
    <location>
        <begin position="24"/>
        <end position="111"/>
    </location>
</feature>
<feature type="transmembrane region" description="Helical; Name=1" evidence="1">
    <location>
        <begin position="112"/>
        <end position="142"/>
    </location>
</feature>
<feature type="topological domain" description="Cytoplasmic" evidence="1">
    <location>
        <begin position="143"/>
        <end position="149"/>
    </location>
</feature>
<feature type="transmembrane region" description="Helical; Name=2" evidence="1">
    <location>
        <begin position="150"/>
        <end position="174"/>
    </location>
</feature>
<feature type="topological domain" description="Extracellular" evidence="1">
    <location>
        <begin position="175"/>
        <end position="189"/>
    </location>
</feature>
<feature type="transmembrane region" description="Helical; Name=3" evidence="1">
    <location>
        <begin position="190"/>
        <end position="218"/>
    </location>
</feature>
<feature type="topological domain" description="Cytoplasmic" evidence="1">
    <location>
        <begin position="219"/>
        <end position="225"/>
    </location>
</feature>
<feature type="transmembrane region" description="Helical; Name=4" evidence="1">
    <location>
        <begin position="226"/>
        <end position="253"/>
    </location>
</feature>
<feature type="topological domain" description="Extracellular" evidence="1">
    <location>
        <begin position="254"/>
        <end position="269"/>
    </location>
</feature>
<feature type="transmembrane region" description="Helical; Name=5" evidence="1">
    <location>
        <begin position="270"/>
        <end position="295"/>
    </location>
</feature>
<feature type="topological domain" description="Cytoplasmic" evidence="1">
    <location>
        <begin position="296"/>
        <end position="306"/>
    </location>
</feature>
<feature type="transmembrane region" description="Helical; Name=6" evidence="1">
    <location>
        <begin position="307"/>
        <end position="331"/>
    </location>
</feature>
<feature type="topological domain" description="Extracellular" evidence="1">
    <location>
        <begin position="332"/>
        <end position="338"/>
    </location>
</feature>
<feature type="transmembrane region" description="Helical; Name=7" evidence="1">
    <location>
        <begin position="339"/>
        <end position="368"/>
    </location>
</feature>
<feature type="topological domain" description="Cytoplasmic" evidence="1">
    <location>
        <begin position="369"/>
        <end position="415"/>
    </location>
</feature>
<feature type="region of interest" description="Important for peptide agonist binding" evidence="1">
    <location>
        <begin position="99"/>
        <end position="108"/>
    </location>
</feature>
<feature type="region of interest" description="Important for antagonist binding" evidence="1">
    <location>
        <begin position="280"/>
        <end position="290"/>
    </location>
</feature>
<feature type="modified residue" description="Phosphoserine; by PKA" evidence="2">
    <location>
        <position position="301"/>
    </location>
</feature>
<feature type="glycosylation site" description="N-linked (GlcNAc...) asparagine" evidence="3">
    <location>
        <position position="38"/>
    </location>
</feature>
<feature type="glycosylation site" description="N-linked (GlcNAc...) asparagine" evidence="3">
    <location>
        <position position="45"/>
    </location>
</feature>
<feature type="glycosylation site" description="N-linked (GlcNAc...) asparagine" evidence="3">
    <location>
        <position position="78"/>
    </location>
</feature>
<feature type="glycosylation site" description="N-linked (GlcNAc...) asparagine" evidence="3">
    <location>
        <position position="90"/>
    </location>
</feature>
<feature type="glycosylation site" description="N-linked (GlcNAc...) asparagine" evidence="3">
    <location>
        <position position="98"/>
    </location>
</feature>
<feature type="disulfide bond" evidence="3">
    <location>
        <begin position="30"/>
        <end position="54"/>
    </location>
</feature>
<feature type="disulfide bond" evidence="3">
    <location>
        <begin position="44"/>
        <end position="87"/>
    </location>
</feature>
<feature type="disulfide bond" evidence="3">
    <location>
        <begin position="68"/>
        <end position="102"/>
    </location>
</feature>
<feature type="disulfide bond" evidence="1">
    <location>
        <begin position="188"/>
        <end position="258"/>
    </location>
</feature>